<accession>O13740</accession>
<feature type="signal peptide" evidence="1">
    <location>
        <begin position="1"/>
        <end position="22"/>
    </location>
</feature>
<feature type="chain" id="PRO_0000014195" description="Mei4-dependent protein 1">
    <location>
        <begin position="23"/>
        <end position="209"/>
    </location>
</feature>
<reference key="1">
    <citation type="journal article" date="2002" name="Nature">
        <title>The genome sequence of Schizosaccharomyces pombe.</title>
        <authorList>
            <person name="Wood V."/>
            <person name="Gwilliam R."/>
            <person name="Rajandream M.A."/>
            <person name="Lyne M.H."/>
            <person name="Lyne R."/>
            <person name="Stewart A."/>
            <person name="Sgouros J.G."/>
            <person name="Peat N."/>
            <person name="Hayles J."/>
            <person name="Baker S.G."/>
            <person name="Basham D."/>
            <person name="Bowman S."/>
            <person name="Brooks K."/>
            <person name="Brown D."/>
            <person name="Brown S."/>
            <person name="Chillingworth T."/>
            <person name="Churcher C.M."/>
            <person name="Collins M."/>
            <person name="Connor R."/>
            <person name="Cronin A."/>
            <person name="Davis P."/>
            <person name="Feltwell T."/>
            <person name="Fraser A."/>
            <person name="Gentles S."/>
            <person name="Goble A."/>
            <person name="Hamlin N."/>
            <person name="Harris D.E."/>
            <person name="Hidalgo J."/>
            <person name="Hodgson G."/>
            <person name="Holroyd S."/>
            <person name="Hornsby T."/>
            <person name="Howarth S."/>
            <person name="Huckle E.J."/>
            <person name="Hunt S."/>
            <person name="Jagels K."/>
            <person name="James K.D."/>
            <person name="Jones L."/>
            <person name="Jones M."/>
            <person name="Leather S."/>
            <person name="McDonald S."/>
            <person name="McLean J."/>
            <person name="Mooney P."/>
            <person name="Moule S."/>
            <person name="Mungall K.L."/>
            <person name="Murphy L.D."/>
            <person name="Niblett D."/>
            <person name="Odell C."/>
            <person name="Oliver K."/>
            <person name="O'Neil S."/>
            <person name="Pearson D."/>
            <person name="Quail M.A."/>
            <person name="Rabbinowitsch E."/>
            <person name="Rutherford K.M."/>
            <person name="Rutter S."/>
            <person name="Saunders D."/>
            <person name="Seeger K."/>
            <person name="Sharp S."/>
            <person name="Skelton J."/>
            <person name="Simmonds M.N."/>
            <person name="Squares R."/>
            <person name="Squares S."/>
            <person name="Stevens K."/>
            <person name="Taylor K."/>
            <person name="Taylor R.G."/>
            <person name="Tivey A."/>
            <person name="Walsh S.V."/>
            <person name="Warren T."/>
            <person name="Whitehead S."/>
            <person name="Woodward J.R."/>
            <person name="Volckaert G."/>
            <person name="Aert R."/>
            <person name="Robben J."/>
            <person name="Grymonprez B."/>
            <person name="Weltjens I."/>
            <person name="Vanstreels E."/>
            <person name="Rieger M."/>
            <person name="Schaefer M."/>
            <person name="Mueller-Auer S."/>
            <person name="Gabel C."/>
            <person name="Fuchs M."/>
            <person name="Duesterhoeft A."/>
            <person name="Fritzc C."/>
            <person name="Holzer E."/>
            <person name="Moestl D."/>
            <person name="Hilbert H."/>
            <person name="Borzym K."/>
            <person name="Langer I."/>
            <person name="Beck A."/>
            <person name="Lehrach H."/>
            <person name="Reinhardt R."/>
            <person name="Pohl T.M."/>
            <person name="Eger P."/>
            <person name="Zimmermann W."/>
            <person name="Wedler H."/>
            <person name="Wambutt R."/>
            <person name="Purnelle B."/>
            <person name="Goffeau A."/>
            <person name="Cadieu E."/>
            <person name="Dreano S."/>
            <person name="Gloux S."/>
            <person name="Lelaure V."/>
            <person name="Mottier S."/>
            <person name="Galibert F."/>
            <person name="Aves S.J."/>
            <person name="Xiang Z."/>
            <person name="Hunt C."/>
            <person name="Moore K."/>
            <person name="Hurst S.M."/>
            <person name="Lucas M."/>
            <person name="Rochet M."/>
            <person name="Gaillardin C."/>
            <person name="Tallada V.A."/>
            <person name="Garzon A."/>
            <person name="Thode G."/>
            <person name="Daga R.R."/>
            <person name="Cruzado L."/>
            <person name="Jimenez J."/>
            <person name="Sanchez M."/>
            <person name="del Rey F."/>
            <person name="Benito J."/>
            <person name="Dominguez A."/>
            <person name="Revuelta J.L."/>
            <person name="Moreno S."/>
            <person name="Armstrong J."/>
            <person name="Forsburg S.L."/>
            <person name="Cerutti L."/>
            <person name="Lowe T."/>
            <person name="McCombie W.R."/>
            <person name="Paulsen I."/>
            <person name="Potashkin J."/>
            <person name="Shpakovski G.V."/>
            <person name="Ussery D."/>
            <person name="Barrell B.G."/>
            <person name="Nurse P."/>
        </authorList>
    </citation>
    <scope>NUCLEOTIDE SEQUENCE [LARGE SCALE GENOMIC DNA]</scope>
    <source>
        <strain>972 / ATCC 24843</strain>
    </source>
</reference>
<dbReference type="EMBL" id="CU329670">
    <property type="protein sequence ID" value="CAB11034.1"/>
    <property type="molecule type" value="Genomic_DNA"/>
</dbReference>
<dbReference type="PIR" id="T37785">
    <property type="entry name" value="T37785"/>
</dbReference>
<dbReference type="RefSeq" id="NP_594217.1">
    <property type="nucleotide sequence ID" value="NM_001019640.2"/>
</dbReference>
<dbReference type="BioGRID" id="278790">
    <property type="interactions" value="3"/>
</dbReference>
<dbReference type="PaxDb" id="4896-SPAC16E8.05c.1"/>
<dbReference type="EnsemblFungi" id="SPAC16E8.05c.1">
    <property type="protein sequence ID" value="SPAC16E8.05c.1:pep"/>
    <property type="gene ID" value="SPAC16E8.05c"/>
</dbReference>
<dbReference type="KEGG" id="spo:2542324"/>
<dbReference type="PomBase" id="SPAC16E8.05c">
    <property type="gene designation" value="mde1"/>
</dbReference>
<dbReference type="VEuPathDB" id="FungiDB:SPAC16E8.05c"/>
<dbReference type="HOGENOM" id="CLU_1316081_0_0_1"/>
<dbReference type="InParanoid" id="O13740"/>
<dbReference type="OMA" id="RYKGWRT"/>
<dbReference type="PRO" id="PR:O13740"/>
<dbReference type="Proteomes" id="UP000002485">
    <property type="component" value="Chromosome I"/>
</dbReference>
<dbReference type="GO" id="GO:0005576">
    <property type="term" value="C:extracellular region"/>
    <property type="evidence" value="ECO:0007669"/>
    <property type="project" value="UniProtKB-SubCell"/>
</dbReference>
<name>MDE1_SCHPO</name>
<sequence length="209" mass="24239">MLHATQLCYLLLFCFLPISISSAVLIEREINVPTTHVLQTLYTRFWSFKAHLGVDMELGIKGSLIHYRDDKLFLGEYPKSRLLRVCYDDNGTFKVKDKRGLVYVQGERLILERDAPSKFSIELVEERREPESPYLLFFSNSSRFSACEESGEWVIYSGDVYSAETTCIPIELVGLRYRGWKTNDKKPFRIIEPGKEPLDAPWNDELIVM</sequence>
<organism>
    <name type="scientific">Schizosaccharomyces pombe (strain 972 / ATCC 24843)</name>
    <name type="common">Fission yeast</name>
    <dbReference type="NCBI Taxonomy" id="284812"/>
    <lineage>
        <taxon>Eukaryota</taxon>
        <taxon>Fungi</taxon>
        <taxon>Dikarya</taxon>
        <taxon>Ascomycota</taxon>
        <taxon>Taphrinomycotina</taxon>
        <taxon>Schizosaccharomycetes</taxon>
        <taxon>Schizosaccharomycetales</taxon>
        <taxon>Schizosaccharomycetaceae</taxon>
        <taxon>Schizosaccharomyces</taxon>
    </lineage>
</organism>
<keyword id="KW-1185">Reference proteome</keyword>
<keyword id="KW-0964">Secreted</keyword>
<keyword id="KW-0732">Signal</keyword>
<comment type="subcellular location">
    <subcellularLocation>
        <location evidence="2">Secreted</location>
    </subcellularLocation>
</comment>
<comment type="miscellaneous">
    <text>Transcription is induced by mei4 transcription factor.</text>
</comment>
<gene>
    <name type="primary">mde1</name>
    <name type="ORF">SPAC16E8.05c</name>
</gene>
<proteinExistence type="inferred from homology"/>
<protein>
    <recommendedName>
        <fullName>Mei4-dependent protein 1</fullName>
    </recommendedName>
</protein>
<evidence type="ECO:0000255" key="1"/>
<evidence type="ECO:0000305" key="2"/>